<accession>Q3A313</accession>
<organism>
    <name type="scientific">Syntrophotalea carbinolica (strain DSM 2380 / NBRC 103641 / GraBd1)</name>
    <name type="common">Pelobacter carbinolicus</name>
    <dbReference type="NCBI Taxonomy" id="338963"/>
    <lineage>
        <taxon>Bacteria</taxon>
        <taxon>Pseudomonadati</taxon>
        <taxon>Thermodesulfobacteriota</taxon>
        <taxon>Desulfuromonadia</taxon>
        <taxon>Desulfuromonadales</taxon>
        <taxon>Syntrophotaleaceae</taxon>
        <taxon>Syntrophotalea</taxon>
    </lineage>
</organism>
<protein>
    <recommendedName>
        <fullName evidence="1">Large ribosomal subunit protein bL25</fullName>
    </recommendedName>
    <alternativeName>
        <fullName evidence="2">50S ribosomal protein L25</fullName>
    </alternativeName>
    <alternativeName>
        <fullName evidence="1">General stress protein CTC</fullName>
    </alternativeName>
</protein>
<keyword id="KW-1185">Reference proteome</keyword>
<keyword id="KW-0687">Ribonucleoprotein</keyword>
<keyword id="KW-0689">Ribosomal protein</keyword>
<keyword id="KW-0694">RNA-binding</keyword>
<keyword id="KW-0699">rRNA-binding</keyword>
<reference key="1">
    <citation type="submission" date="2005-10" db="EMBL/GenBank/DDBJ databases">
        <title>Complete sequence of Pelobacter carbinolicus DSM 2380.</title>
        <authorList>
            <person name="Copeland A."/>
            <person name="Lucas S."/>
            <person name="Lapidus A."/>
            <person name="Barry K."/>
            <person name="Detter J.C."/>
            <person name="Glavina T."/>
            <person name="Hammon N."/>
            <person name="Israni S."/>
            <person name="Pitluck S."/>
            <person name="Chertkov O."/>
            <person name="Schmutz J."/>
            <person name="Larimer F."/>
            <person name="Land M."/>
            <person name="Kyrpides N."/>
            <person name="Ivanova N."/>
            <person name="Richardson P."/>
        </authorList>
    </citation>
    <scope>NUCLEOTIDE SEQUENCE [LARGE SCALE GENOMIC DNA]</scope>
    <source>
        <strain>DSM 2380 / NBRC 103641 / GraBd1</strain>
    </source>
</reference>
<gene>
    <name evidence="1" type="primary">rplY</name>
    <name evidence="1" type="synonym">ctc</name>
    <name type="ordered locus">Pcar_2003</name>
</gene>
<proteinExistence type="inferred from homology"/>
<sequence length="208" mass="22113">MAQTELNVSQREGLGKGTARSLRREGLIPAVMYGKGVENCSLVVEPKQLAAIIGSEAGLNSLITLKGEGAFDGKVVILKDMQVDPIRQTPLHVDFQAIDLNAKTHVLVPLVVVGKSEGEKQGGNLQIIRHEVELVCLPANIPANIEVDVTALNIGDALHVQDVQLPEGVEIPQDVNFTVVTVTGRTAEVEEEGAEVVEEGEEAAEAGE</sequence>
<feature type="chain" id="PRO_0000244223" description="Large ribosomal subunit protein bL25">
    <location>
        <begin position="1"/>
        <end position="208"/>
    </location>
</feature>
<name>RL25_SYNC1</name>
<dbReference type="EMBL" id="CP000142">
    <property type="protein sequence ID" value="ABA89244.1"/>
    <property type="molecule type" value="Genomic_DNA"/>
</dbReference>
<dbReference type="RefSeq" id="WP_011341754.1">
    <property type="nucleotide sequence ID" value="NC_007498.2"/>
</dbReference>
<dbReference type="SMR" id="Q3A313"/>
<dbReference type="STRING" id="338963.Pcar_2003"/>
<dbReference type="KEGG" id="pca:Pcar_2003"/>
<dbReference type="eggNOG" id="COG1825">
    <property type="taxonomic scope" value="Bacteria"/>
</dbReference>
<dbReference type="HOGENOM" id="CLU_075939_2_1_7"/>
<dbReference type="OrthoDB" id="9786489at2"/>
<dbReference type="Proteomes" id="UP000002534">
    <property type="component" value="Chromosome"/>
</dbReference>
<dbReference type="GO" id="GO:0022625">
    <property type="term" value="C:cytosolic large ribosomal subunit"/>
    <property type="evidence" value="ECO:0007669"/>
    <property type="project" value="TreeGrafter"/>
</dbReference>
<dbReference type="GO" id="GO:0008097">
    <property type="term" value="F:5S rRNA binding"/>
    <property type="evidence" value="ECO:0007669"/>
    <property type="project" value="InterPro"/>
</dbReference>
<dbReference type="GO" id="GO:0003735">
    <property type="term" value="F:structural constituent of ribosome"/>
    <property type="evidence" value="ECO:0007669"/>
    <property type="project" value="InterPro"/>
</dbReference>
<dbReference type="GO" id="GO:0006412">
    <property type="term" value="P:translation"/>
    <property type="evidence" value="ECO:0007669"/>
    <property type="project" value="UniProtKB-UniRule"/>
</dbReference>
<dbReference type="CDD" id="cd00495">
    <property type="entry name" value="Ribosomal_L25_TL5_CTC"/>
    <property type="match status" value="1"/>
</dbReference>
<dbReference type="Gene3D" id="2.170.120.20">
    <property type="entry name" value="Ribosomal protein L25, beta domain"/>
    <property type="match status" value="1"/>
</dbReference>
<dbReference type="Gene3D" id="2.40.240.10">
    <property type="entry name" value="Ribosomal Protein L25, Chain P"/>
    <property type="match status" value="1"/>
</dbReference>
<dbReference type="HAMAP" id="MF_01334">
    <property type="entry name" value="Ribosomal_bL25_CTC"/>
    <property type="match status" value="1"/>
</dbReference>
<dbReference type="InterPro" id="IPR020056">
    <property type="entry name" value="Rbsml_bL25/Gln-tRNA_synth_N"/>
</dbReference>
<dbReference type="InterPro" id="IPR011035">
    <property type="entry name" value="Ribosomal_bL25/Gln-tRNA_synth"/>
</dbReference>
<dbReference type="InterPro" id="IPR020057">
    <property type="entry name" value="Ribosomal_bL25_b-dom"/>
</dbReference>
<dbReference type="InterPro" id="IPR037121">
    <property type="entry name" value="Ribosomal_bL25_C"/>
</dbReference>
<dbReference type="InterPro" id="IPR001021">
    <property type="entry name" value="Ribosomal_bL25_long"/>
</dbReference>
<dbReference type="InterPro" id="IPR029751">
    <property type="entry name" value="Ribosomal_L25_dom"/>
</dbReference>
<dbReference type="InterPro" id="IPR020930">
    <property type="entry name" value="Ribosomal_uL5_bac-type"/>
</dbReference>
<dbReference type="NCBIfam" id="TIGR00731">
    <property type="entry name" value="bL25_bact_ctc"/>
    <property type="match status" value="1"/>
</dbReference>
<dbReference type="NCBIfam" id="NF004128">
    <property type="entry name" value="PRK05618.1-2"/>
    <property type="match status" value="1"/>
</dbReference>
<dbReference type="PANTHER" id="PTHR33284">
    <property type="entry name" value="RIBOSOMAL PROTEIN L25/GLN-TRNA SYNTHETASE, ANTI-CODON-BINDING DOMAIN-CONTAINING PROTEIN"/>
    <property type="match status" value="1"/>
</dbReference>
<dbReference type="PANTHER" id="PTHR33284:SF1">
    <property type="entry name" value="RIBOSOMAL PROTEIN L25_GLN-TRNA SYNTHETASE, ANTI-CODON-BINDING DOMAIN-CONTAINING PROTEIN"/>
    <property type="match status" value="1"/>
</dbReference>
<dbReference type="Pfam" id="PF01386">
    <property type="entry name" value="Ribosomal_L25p"/>
    <property type="match status" value="1"/>
</dbReference>
<dbReference type="Pfam" id="PF14693">
    <property type="entry name" value="Ribosomal_TL5_C"/>
    <property type="match status" value="1"/>
</dbReference>
<dbReference type="SUPFAM" id="SSF50715">
    <property type="entry name" value="Ribosomal protein L25-like"/>
    <property type="match status" value="1"/>
</dbReference>
<comment type="function">
    <text evidence="1">This is one of the proteins that binds to the 5S RNA in the ribosome where it forms part of the central protuberance.</text>
</comment>
<comment type="subunit">
    <text evidence="1">Part of the 50S ribosomal subunit; part of the 5S rRNA/L5/L18/L25 subcomplex. Contacts the 5S rRNA. Binds to the 5S rRNA independently of L5 and L18.</text>
</comment>
<comment type="similarity">
    <text evidence="1">Belongs to the bacterial ribosomal protein bL25 family. CTC subfamily.</text>
</comment>
<evidence type="ECO:0000255" key="1">
    <source>
        <dbReference type="HAMAP-Rule" id="MF_01334"/>
    </source>
</evidence>
<evidence type="ECO:0000305" key="2"/>